<keyword id="KW-1185">Reference proteome</keyword>
<name>Y040_SIFVH</name>
<accession>Q914J1</accession>
<organism>
    <name type="scientific">Sulfolobus islandicus filamentous virus (isolate Iceland/Hveragerdi)</name>
    <name type="common">SIFV</name>
    <dbReference type="NCBI Taxonomy" id="654908"/>
    <lineage>
        <taxon>Viruses</taxon>
        <taxon>Adnaviria</taxon>
        <taxon>Zilligvirae</taxon>
        <taxon>Taleaviricota</taxon>
        <taxon>Tokiviricetes</taxon>
        <taxon>Ligamenvirales</taxon>
        <taxon>Lipothrixviridae</taxon>
        <taxon>Betalipothrixvirus</taxon>
        <taxon>Sulfolobus islandicus filamentous virus</taxon>
    </lineage>
</organism>
<organismHost>
    <name type="scientific">Saccharolobus islandicus</name>
    <name type="common">Sulfolobus islandicus</name>
    <dbReference type="NCBI Taxonomy" id="43080"/>
</organismHost>
<protein>
    <recommendedName>
        <fullName>Uncharacterized protein 40</fullName>
    </recommendedName>
</protein>
<dbReference type="EMBL" id="AF440571">
    <property type="protein sequence ID" value="AAL27750.1"/>
    <property type="molecule type" value="Genomic_DNA"/>
</dbReference>
<dbReference type="RefSeq" id="NP_445704.1">
    <property type="nucleotide sequence ID" value="NC_003214.2"/>
</dbReference>
<dbReference type="GeneID" id="922280"/>
<dbReference type="KEGG" id="vg:922280"/>
<dbReference type="Proteomes" id="UP000007017">
    <property type="component" value="Segment"/>
</dbReference>
<proteinExistence type="predicted"/>
<gene>
    <name type="primary">SIFV0040</name>
</gene>
<sequence length="210" mass="24466">MPQWNLATFVKLLEYAKKNGIVKRYNTYYIKGVALVQCNQVSINVTVAKDHLHMFYDPVMNMYFAYSMPFFYQYPNAQQLFTEGKKLCEELEKLTPSATLTPPKNADLDLDRILAKLSITNDKVLTKGEEYKKAKEYTRTHYPECYAIVKEMGTNKDTVKLIEAIFAREWETAERTLTLIAMDCVEPECISRLGKFIDLCRETISRREVR</sequence>
<feature type="chain" id="PRO_0000385417" description="Uncharacterized protein 40">
    <location>
        <begin position="1"/>
        <end position="210"/>
    </location>
</feature>
<reference key="1">
    <citation type="journal article" date="2000" name="Virology">
        <title>A novel lipothrixvirus, SIFV, of the extremely thermophilic crenarchaeon Sulfolobus.</title>
        <authorList>
            <person name="Arnold H.P."/>
            <person name="Zillig W."/>
            <person name="Ziese U."/>
            <person name="Holz I."/>
            <person name="Crosby M."/>
            <person name="Utterback T."/>
            <person name="Weidmann J.F."/>
            <person name="Umayam L.A."/>
            <person name="Teffera K."/>
            <person name="Kristjanson J.K."/>
            <person name="Klenk H.P."/>
            <person name="Nelson K.E."/>
            <person name="Fraser C.M."/>
        </authorList>
    </citation>
    <scope>NUCLEOTIDE SEQUENCE [GENOMIC DNA]</scope>
</reference>